<feature type="chain" id="PRO_1000053583" description="Protein GrpE">
    <location>
        <begin position="1"/>
        <end position="195"/>
    </location>
</feature>
<accession>Q0BLK5</accession>
<proteinExistence type="inferred from homology"/>
<gene>
    <name evidence="1" type="primary">grpE</name>
    <name type="ordered locus">FTH_1166</name>
</gene>
<reference key="1">
    <citation type="journal article" date="2006" name="J. Bacteriol.">
        <title>Chromosome rearrangement and diversification of Francisella tularensis revealed by the type B (OSU18) genome sequence.</title>
        <authorList>
            <person name="Petrosino J.F."/>
            <person name="Xiang Q."/>
            <person name="Karpathy S.E."/>
            <person name="Jiang H."/>
            <person name="Yerrapragada S."/>
            <person name="Liu Y."/>
            <person name="Gioia J."/>
            <person name="Hemphill L."/>
            <person name="Gonzalez A."/>
            <person name="Raghavan T.M."/>
            <person name="Uzman A."/>
            <person name="Fox G.E."/>
            <person name="Highlander S."/>
            <person name="Reichard M."/>
            <person name="Morton R.J."/>
            <person name="Clinkenbeard K.D."/>
            <person name="Weinstock G.M."/>
        </authorList>
    </citation>
    <scope>NUCLEOTIDE SEQUENCE [LARGE SCALE GENOMIC DNA]</scope>
    <source>
        <strain>OSU18</strain>
    </source>
</reference>
<name>GRPE_FRATO</name>
<comment type="function">
    <text evidence="1">Participates actively in the response to hyperosmotic and heat shock by preventing the aggregation of stress-denatured proteins, in association with DnaK and GrpE. It is the nucleotide exchange factor for DnaK and may function as a thermosensor. Unfolded proteins bind initially to DnaJ; upon interaction with the DnaJ-bound protein, DnaK hydrolyzes its bound ATP, resulting in the formation of a stable complex. GrpE releases ADP from DnaK; ATP binding to DnaK triggers the release of the substrate protein, thus completing the reaction cycle. Several rounds of ATP-dependent interactions between DnaJ, DnaK and GrpE are required for fully efficient folding.</text>
</comment>
<comment type="subunit">
    <text evidence="1">Homodimer.</text>
</comment>
<comment type="subcellular location">
    <subcellularLocation>
        <location evidence="1">Cytoplasm</location>
    </subcellularLocation>
</comment>
<comment type="similarity">
    <text evidence="1">Belongs to the GrpE family.</text>
</comment>
<evidence type="ECO:0000255" key="1">
    <source>
        <dbReference type="HAMAP-Rule" id="MF_01151"/>
    </source>
</evidence>
<dbReference type="EMBL" id="CP000437">
    <property type="protein sequence ID" value="ABI83029.1"/>
    <property type="molecule type" value="Genomic_DNA"/>
</dbReference>
<dbReference type="RefSeq" id="WP_011648703.1">
    <property type="nucleotide sequence ID" value="NC_017463.1"/>
</dbReference>
<dbReference type="SMR" id="Q0BLK5"/>
<dbReference type="KEGG" id="fth:FTH_1166"/>
<dbReference type="GO" id="GO:0005829">
    <property type="term" value="C:cytosol"/>
    <property type="evidence" value="ECO:0007669"/>
    <property type="project" value="TreeGrafter"/>
</dbReference>
<dbReference type="GO" id="GO:0000774">
    <property type="term" value="F:adenyl-nucleotide exchange factor activity"/>
    <property type="evidence" value="ECO:0007669"/>
    <property type="project" value="InterPro"/>
</dbReference>
<dbReference type="GO" id="GO:0042803">
    <property type="term" value="F:protein homodimerization activity"/>
    <property type="evidence" value="ECO:0007669"/>
    <property type="project" value="InterPro"/>
</dbReference>
<dbReference type="GO" id="GO:0051087">
    <property type="term" value="F:protein-folding chaperone binding"/>
    <property type="evidence" value="ECO:0007669"/>
    <property type="project" value="InterPro"/>
</dbReference>
<dbReference type="GO" id="GO:0051082">
    <property type="term" value="F:unfolded protein binding"/>
    <property type="evidence" value="ECO:0007669"/>
    <property type="project" value="TreeGrafter"/>
</dbReference>
<dbReference type="GO" id="GO:0006457">
    <property type="term" value="P:protein folding"/>
    <property type="evidence" value="ECO:0007669"/>
    <property type="project" value="InterPro"/>
</dbReference>
<dbReference type="CDD" id="cd00446">
    <property type="entry name" value="GrpE"/>
    <property type="match status" value="1"/>
</dbReference>
<dbReference type="FunFam" id="2.30.22.10:FF:000001">
    <property type="entry name" value="Protein GrpE"/>
    <property type="match status" value="1"/>
</dbReference>
<dbReference type="Gene3D" id="3.90.20.20">
    <property type="match status" value="1"/>
</dbReference>
<dbReference type="Gene3D" id="2.30.22.10">
    <property type="entry name" value="Head domain of nucleotide exchange factor GrpE"/>
    <property type="match status" value="1"/>
</dbReference>
<dbReference type="HAMAP" id="MF_01151">
    <property type="entry name" value="GrpE"/>
    <property type="match status" value="1"/>
</dbReference>
<dbReference type="InterPro" id="IPR000740">
    <property type="entry name" value="GrpE"/>
</dbReference>
<dbReference type="InterPro" id="IPR013805">
    <property type="entry name" value="GrpE_coiled_coil"/>
</dbReference>
<dbReference type="InterPro" id="IPR009012">
    <property type="entry name" value="GrpE_head"/>
</dbReference>
<dbReference type="NCBIfam" id="NF010737">
    <property type="entry name" value="PRK14139.1"/>
    <property type="match status" value="1"/>
</dbReference>
<dbReference type="NCBIfam" id="NF010738">
    <property type="entry name" value="PRK14140.1"/>
    <property type="match status" value="1"/>
</dbReference>
<dbReference type="NCBIfam" id="NF010746">
    <property type="entry name" value="PRK14148.1"/>
    <property type="match status" value="1"/>
</dbReference>
<dbReference type="NCBIfam" id="NF010748">
    <property type="entry name" value="PRK14150.1"/>
    <property type="match status" value="1"/>
</dbReference>
<dbReference type="PANTHER" id="PTHR21237">
    <property type="entry name" value="GRPE PROTEIN"/>
    <property type="match status" value="1"/>
</dbReference>
<dbReference type="PANTHER" id="PTHR21237:SF23">
    <property type="entry name" value="GRPE PROTEIN HOMOLOG, MITOCHONDRIAL"/>
    <property type="match status" value="1"/>
</dbReference>
<dbReference type="Pfam" id="PF01025">
    <property type="entry name" value="GrpE"/>
    <property type="match status" value="1"/>
</dbReference>
<dbReference type="PRINTS" id="PR00773">
    <property type="entry name" value="GRPEPROTEIN"/>
</dbReference>
<dbReference type="SUPFAM" id="SSF58014">
    <property type="entry name" value="Coiled-coil domain of nucleotide exchange factor GrpE"/>
    <property type="match status" value="1"/>
</dbReference>
<dbReference type="SUPFAM" id="SSF51064">
    <property type="entry name" value="Head domain of nucleotide exchange factor GrpE"/>
    <property type="match status" value="1"/>
</dbReference>
<dbReference type="PROSITE" id="PS01071">
    <property type="entry name" value="GRPE"/>
    <property type="match status" value="1"/>
</dbReference>
<protein>
    <recommendedName>
        <fullName evidence="1">Protein GrpE</fullName>
    </recommendedName>
    <alternativeName>
        <fullName evidence="1">HSP-70 cofactor</fullName>
    </alternativeName>
</protein>
<sequence length="195" mass="22018">MSKQEKSNVEDKSLDIETAAQVETAQESASGALEELSVEEQLERAKDTIKELEDSCDQFKDEALRAKAEMENIRKRAERDVSNARKFGIEKFAKELLPVIDSIEQALKHEVKLEEAIAMKEGIELTAKILVDILKKNGVEELDPKGEKFDPNLHEAMAMIPNPEFEDNTIFDVFQKGYMLNGRIVRAAKVVIVKN</sequence>
<organism>
    <name type="scientific">Francisella tularensis subsp. holarctica (strain OSU18)</name>
    <dbReference type="NCBI Taxonomy" id="393011"/>
    <lineage>
        <taxon>Bacteria</taxon>
        <taxon>Pseudomonadati</taxon>
        <taxon>Pseudomonadota</taxon>
        <taxon>Gammaproteobacteria</taxon>
        <taxon>Thiotrichales</taxon>
        <taxon>Francisellaceae</taxon>
        <taxon>Francisella</taxon>
    </lineage>
</organism>
<keyword id="KW-0143">Chaperone</keyword>
<keyword id="KW-0963">Cytoplasm</keyword>
<keyword id="KW-0346">Stress response</keyword>